<dbReference type="GO" id="GO:0005576">
    <property type="term" value="C:extracellular region"/>
    <property type="evidence" value="ECO:0007669"/>
    <property type="project" value="UniProtKB-SubCell"/>
</dbReference>
<dbReference type="GO" id="GO:0030414">
    <property type="term" value="F:peptidase inhibitor activity"/>
    <property type="evidence" value="ECO:0007669"/>
    <property type="project" value="UniProtKB-KW"/>
</dbReference>
<dbReference type="GO" id="GO:0008217">
    <property type="term" value="P:regulation of blood pressure"/>
    <property type="evidence" value="ECO:0007669"/>
    <property type="project" value="UniProtKB-KW"/>
</dbReference>
<organism>
    <name type="scientific">Buthus occitanus</name>
    <name type="common">Common European scorpion</name>
    <dbReference type="NCBI Taxonomy" id="6868"/>
    <lineage>
        <taxon>Eukaryota</taxon>
        <taxon>Metazoa</taxon>
        <taxon>Ecdysozoa</taxon>
        <taxon>Arthropoda</taxon>
        <taxon>Chelicerata</taxon>
        <taxon>Arachnida</taxon>
        <taxon>Scorpiones</taxon>
        <taxon>Buthida</taxon>
        <taxon>Buthoidea</taxon>
        <taxon>Buthidae</taxon>
        <taxon>Buthus</taxon>
    </lineage>
</organism>
<accession>Q9TWD3</accession>
<feature type="peptide" id="PRO_0000343192" description="Bradykinin-potentiating peptide K12">
    <location>
        <begin position="1"/>
        <end position="21"/>
    </location>
</feature>
<feature type="region of interest" description="Disordered" evidence="1">
    <location>
        <begin position="1"/>
        <end position="21"/>
    </location>
</feature>
<comment type="function">
    <text evidence="2">Inhibits angiotensin-converting enzyme (ACE), but does not serve as substrate for the enzyme. Potentiate bradykinin (BK) on the isolated guinea pig ileum as well as the isolated rat uterus for contraction. Also potentiates in vivo the depressor effect of BK on arterial blood pressure in the normotensive anesthetized rat. Intracerebroventricular injection into mice does not show toxic activity.</text>
</comment>
<comment type="subcellular location">
    <subcellularLocation>
        <location evidence="2">Secreted</location>
    </subcellularLocation>
</comment>
<comment type="tissue specificity">
    <text evidence="5">Expressed by the venom gland.</text>
</comment>
<comment type="mass spectrometry"/>
<comment type="similarity">
    <text evidence="5">Belongs to the non-disulfide-bridged peptide (NDBP) superfamily. Scorpion BPP (group 1) family.</text>
</comment>
<reference key="1">
    <citation type="journal article" date="1995" name="Peptides">
        <title>A bradykinin-potentiating peptide (peptide K12) isolated from the venom of Egyptian scorpion Buthus occitanus.</title>
        <authorList>
            <person name="Meki A.R."/>
            <person name="Nassar A.Y."/>
            <person name="Rochat H."/>
        </authorList>
    </citation>
    <scope>PROTEIN SEQUENCE</scope>
    <scope>FUNCTION</scope>
    <scope>SUBCELLULAR LOCATION</scope>
    <scope>MASS SPECTROMETRY</scope>
    <source>
        <tissue>Venom</tissue>
    </source>
</reference>
<reference key="2">
    <citation type="journal article" date="2014" name="Peptides">
        <title>Scorpion venom peptides with no disulfide bridges: a review.</title>
        <authorList>
            <person name="Almaaytah A."/>
            <person name="Albalas Q."/>
        </authorList>
    </citation>
    <scope>NOMENCLATURE</scope>
</reference>
<protein>
    <recommendedName>
        <fullName evidence="4">Bradykinin-potentiating peptide K12</fullName>
        <shortName evidence="4">BPP-K12</shortName>
        <shortName evidence="4">Peptide K-12</shortName>
    </recommendedName>
    <alternativeName>
        <fullName evidence="3 4">Non-disulfide-bridged peptide 1.2</fullName>
        <shortName evidence="3 4">NDBP-1.2</shortName>
    </alternativeName>
</protein>
<keyword id="KW-0903">Direct protein sequencing</keyword>
<keyword id="KW-0382">Hypotensive agent</keyword>
<keyword id="KW-0481">Metalloenzyme inhibitor</keyword>
<keyword id="KW-0483">Metalloprotease inhibitor</keyword>
<keyword id="KW-0646">Protease inhibitor</keyword>
<keyword id="KW-0964">Secreted</keyword>
<sequence>LRDYANRVINGGPVEAAGPPA</sequence>
<name>NDB12_BUTOI</name>
<proteinExistence type="evidence at protein level"/>
<evidence type="ECO:0000256" key="1">
    <source>
        <dbReference type="SAM" id="MobiDB-lite"/>
    </source>
</evidence>
<evidence type="ECO:0000269" key="2">
    <source>
    </source>
</evidence>
<evidence type="ECO:0000303" key="3">
    <source>
    </source>
</evidence>
<evidence type="ECO:0000303" key="4">
    <source>
    </source>
</evidence>
<evidence type="ECO:0000305" key="5"/>